<accession>Q5SJA1</accession>
<sequence length="310" mass="32795">MKVGIVGSGMVGSATAYALALLGVAREVVLVDLDRKLAQAHAEDILHATPFAHPVWVRAGSYGDLEGARAVVLAAGVAQRPGETRLQLLDRNAQVFAQVVPRVLEAAPEAVLLVATNPVDVMTQVAYRLSGLPPGRVVGSGTILDTARFRALLAEYLRVAPQSVHAYVLGEHGDSEVLVWSSAQVGGVPLLEFAEARGRALSPEDRARIDEGVRRAAYRIIEGKGATYYGIGAGLARLVRAILTDEKGVYTVSAFTPEVEGVLEVSLSLPRILGAGGVEGTVYPSLSPEEREALRRSAEILKEAAFALGF</sequence>
<feature type="chain" id="PRO_0000237569" description="L-lactate dehydrogenase">
    <location>
        <begin position="1"/>
        <end position="310"/>
    </location>
</feature>
<feature type="active site" description="Proton acceptor" evidence="1 7 10 12 14">
    <location>
        <position position="172"/>
    </location>
</feature>
<feature type="binding site" evidence="1 2 4 5 8 11 12 13 14 15">
    <location>
        <begin position="10"/>
        <end position="11"/>
    </location>
    <ligand>
        <name>NAD(+)</name>
        <dbReference type="ChEBI" id="CHEBI:57540"/>
    </ligand>
</feature>
<feature type="binding site" evidence="1 2 4 5 8 11 12 13 14 15">
    <location>
        <position position="32"/>
    </location>
    <ligand>
        <name>NAD(+)</name>
        <dbReference type="ChEBI" id="CHEBI:57540"/>
    </ligand>
</feature>
<feature type="binding site" evidence="1 2 5 12 13 14">
    <location>
        <position position="62"/>
    </location>
    <ligand>
        <name>NAD(+)</name>
        <dbReference type="ChEBI" id="CHEBI:57540"/>
    </ligand>
</feature>
<feature type="binding site" evidence="1 2 4 5 8 11 12 13 14 15">
    <location>
        <begin position="76"/>
        <end position="77"/>
    </location>
    <ligand>
        <name>NAD(+)</name>
        <dbReference type="ChEBI" id="CHEBI:57540"/>
    </ligand>
</feature>
<feature type="binding site" evidence="1 7 10 12 14">
    <location>
        <position position="79"/>
    </location>
    <ligand>
        <name>substrate</name>
    </ligand>
</feature>
<feature type="binding site" evidence="7 10 12 14">
    <location>
        <position position="85"/>
    </location>
    <ligand>
        <name>substrate</name>
    </ligand>
</feature>
<feature type="binding site" evidence="1 2 5 12 14">
    <location>
        <begin position="115"/>
        <end position="117"/>
    </location>
    <ligand>
        <name>NAD(+)</name>
        <dbReference type="ChEBI" id="CHEBI:57540"/>
    </ligand>
</feature>
<feature type="binding site" evidence="1">
    <location>
        <begin position="117"/>
        <end position="120"/>
    </location>
    <ligand>
        <name>substrate</name>
    </ligand>
</feature>
<feature type="binding site" evidence="2 5 12 14">
    <location>
        <position position="140"/>
    </location>
    <ligand>
        <name>NAD(+)</name>
        <dbReference type="ChEBI" id="CHEBI:57540"/>
    </ligand>
</feature>
<feature type="binding site" evidence="1 7 10 12 14">
    <location>
        <begin position="145"/>
        <end position="148"/>
    </location>
    <ligand>
        <name>substrate</name>
    </ligand>
</feature>
<feature type="binding site" evidence="1">
    <location>
        <position position="150"/>
    </location>
    <ligand>
        <name>beta-D-fructose 1,6-bisphosphate</name>
        <dbReference type="ChEBI" id="CHEBI:32966"/>
        <note>allosteric activator</note>
    </ligand>
</feature>
<feature type="binding site" evidence="1">
    <location>
        <position position="165"/>
    </location>
    <ligand>
        <name>beta-D-fructose 1,6-bisphosphate</name>
        <dbReference type="ChEBI" id="CHEBI:32966"/>
        <note>allosteric activator</note>
    </ligand>
</feature>
<feature type="binding site" evidence="7 10 12 14">
    <location>
        <position position="227"/>
    </location>
    <ligand>
        <name>substrate</name>
    </ligand>
</feature>
<feature type="modified residue" description="Phosphotyrosine" evidence="1">
    <location>
        <position position="218"/>
    </location>
</feature>
<feature type="strand" evidence="16">
    <location>
        <begin position="2"/>
        <end position="6"/>
    </location>
</feature>
<feature type="helix" evidence="16">
    <location>
        <begin position="10"/>
        <end position="21"/>
    </location>
</feature>
<feature type="strand" evidence="16">
    <location>
        <begin position="26"/>
        <end position="31"/>
    </location>
</feature>
<feature type="helix" evidence="16">
    <location>
        <begin position="35"/>
        <end position="46"/>
    </location>
</feature>
<feature type="helix" evidence="16">
    <location>
        <begin position="47"/>
        <end position="51"/>
    </location>
</feature>
<feature type="strand" evidence="16">
    <location>
        <begin position="56"/>
        <end position="59"/>
    </location>
</feature>
<feature type="helix" evidence="16">
    <location>
        <begin position="62"/>
        <end position="65"/>
    </location>
</feature>
<feature type="strand" evidence="16">
    <location>
        <begin position="68"/>
        <end position="73"/>
    </location>
</feature>
<feature type="helix" evidence="16">
    <location>
        <begin position="85"/>
        <end position="106"/>
    </location>
</feature>
<feature type="strand" evidence="16">
    <location>
        <begin position="111"/>
        <end position="114"/>
    </location>
</feature>
<feature type="strand" evidence="16">
    <location>
        <begin position="116"/>
        <end position="118"/>
    </location>
</feature>
<feature type="helix" evidence="16">
    <location>
        <begin position="119"/>
        <end position="130"/>
    </location>
</feature>
<feature type="helix" evidence="16">
    <location>
        <begin position="134"/>
        <end position="136"/>
    </location>
</feature>
<feature type="strand" evidence="16">
    <location>
        <begin position="137"/>
        <end position="139"/>
    </location>
</feature>
<feature type="helix" evidence="16">
    <location>
        <begin position="143"/>
        <end position="157"/>
    </location>
</feature>
<feature type="helix" evidence="16">
    <location>
        <begin position="161"/>
        <end position="163"/>
    </location>
</feature>
<feature type="strand" evidence="16">
    <location>
        <begin position="164"/>
        <end position="170"/>
    </location>
</feature>
<feature type="strand" evidence="16">
    <location>
        <begin position="177"/>
        <end position="185"/>
    </location>
</feature>
<feature type="helix" evidence="16">
    <location>
        <begin position="190"/>
        <end position="196"/>
    </location>
</feature>
<feature type="helix" evidence="16">
    <location>
        <begin position="203"/>
        <end position="214"/>
    </location>
</feature>
<feature type="helix" evidence="16">
    <location>
        <begin position="216"/>
        <end position="224"/>
    </location>
</feature>
<feature type="helix" evidence="16">
    <location>
        <begin position="229"/>
        <end position="243"/>
    </location>
</feature>
<feature type="strand" evidence="16">
    <location>
        <begin position="248"/>
        <end position="259"/>
    </location>
</feature>
<feature type="strand" evidence="16">
    <location>
        <begin position="262"/>
        <end position="274"/>
    </location>
</feature>
<feature type="strand" evidence="16">
    <location>
        <begin position="277"/>
        <end position="281"/>
    </location>
</feature>
<feature type="helix" evidence="16">
    <location>
        <begin position="288"/>
        <end position="308"/>
    </location>
</feature>
<dbReference type="EC" id="1.1.1.27" evidence="1 2"/>
<dbReference type="EMBL" id="AP008226">
    <property type="protein sequence ID" value="BAD70936.1"/>
    <property type="molecule type" value="Genomic_DNA"/>
</dbReference>
<dbReference type="RefSeq" id="WP_011228449.1">
    <property type="nucleotide sequence ID" value="NC_006461.1"/>
</dbReference>
<dbReference type="RefSeq" id="YP_144379.1">
    <property type="nucleotide sequence ID" value="NC_006461.1"/>
</dbReference>
<dbReference type="PDB" id="2E37">
    <property type="method" value="X-ray"/>
    <property type="resolution" value="2.30 A"/>
    <property type="chains" value="A/B/C/D/E/F/G/H=1-310"/>
</dbReference>
<dbReference type="PDB" id="2V6M">
    <property type="method" value="X-ray"/>
    <property type="resolution" value="2.20 A"/>
    <property type="chains" value="A/B/C/D=1-310"/>
</dbReference>
<dbReference type="PDB" id="2V7P">
    <property type="method" value="X-ray"/>
    <property type="resolution" value="2.10 A"/>
    <property type="chains" value="A/B/C/D=1-310"/>
</dbReference>
<dbReference type="PDB" id="2XXB">
    <property type="method" value="X-ray"/>
    <property type="resolution" value="2.15 A"/>
    <property type="chains" value="A/B=1-310"/>
</dbReference>
<dbReference type="PDB" id="2XXJ">
    <property type="method" value="X-ray"/>
    <property type="resolution" value="1.96 A"/>
    <property type="chains" value="A/B/C/D=1-310"/>
</dbReference>
<dbReference type="PDB" id="3ZZN">
    <property type="method" value="X-ray"/>
    <property type="resolution" value="2.90 A"/>
    <property type="chains" value="A/B/C/D=1-310"/>
</dbReference>
<dbReference type="PDB" id="4A73">
    <property type="method" value="X-ray"/>
    <property type="resolution" value="3.00 A"/>
    <property type="chains" value="A/B/C/D=1-310"/>
</dbReference>
<dbReference type="PDBsum" id="2E37"/>
<dbReference type="PDBsum" id="2V6M"/>
<dbReference type="PDBsum" id="2V7P"/>
<dbReference type="PDBsum" id="2XXB"/>
<dbReference type="PDBsum" id="2XXJ"/>
<dbReference type="PDBsum" id="3ZZN"/>
<dbReference type="PDBsum" id="4A73"/>
<dbReference type="SMR" id="Q5SJA1"/>
<dbReference type="EnsemblBacteria" id="BAD70936">
    <property type="protein sequence ID" value="BAD70936"/>
    <property type="gene ID" value="BAD70936"/>
</dbReference>
<dbReference type="GeneID" id="3169622"/>
<dbReference type="KEGG" id="ttj:TTHA1113"/>
<dbReference type="PATRIC" id="fig|300852.9.peg.1092"/>
<dbReference type="eggNOG" id="COG0039">
    <property type="taxonomic scope" value="Bacteria"/>
</dbReference>
<dbReference type="HOGENOM" id="CLU_045401_1_1_0"/>
<dbReference type="PhylomeDB" id="Q5SJA1"/>
<dbReference type="BRENDA" id="1.1.1.27">
    <property type="organism ID" value="2305"/>
</dbReference>
<dbReference type="UniPathway" id="UPA00554">
    <property type="reaction ID" value="UER00611"/>
</dbReference>
<dbReference type="EvolutionaryTrace" id="Q5SJA1"/>
<dbReference type="Proteomes" id="UP000000532">
    <property type="component" value="Chromosome"/>
</dbReference>
<dbReference type="GO" id="GO:0005737">
    <property type="term" value="C:cytoplasm"/>
    <property type="evidence" value="ECO:0007669"/>
    <property type="project" value="UniProtKB-SubCell"/>
</dbReference>
<dbReference type="GO" id="GO:0004459">
    <property type="term" value="F:L-lactate dehydrogenase activity"/>
    <property type="evidence" value="ECO:0007669"/>
    <property type="project" value="UniProtKB-UniRule"/>
</dbReference>
<dbReference type="GO" id="GO:0006096">
    <property type="term" value="P:glycolytic process"/>
    <property type="evidence" value="ECO:0007669"/>
    <property type="project" value="UniProtKB-UniRule"/>
</dbReference>
<dbReference type="GO" id="GO:0006089">
    <property type="term" value="P:lactate metabolic process"/>
    <property type="evidence" value="ECO:0007669"/>
    <property type="project" value="TreeGrafter"/>
</dbReference>
<dbReference type="CDD" id="cd05292">
    <property type="entry name" value="LDH_2"/>
    <property type="match status" value="1"/>
</dbReference>
<dbReference type="Gene3D" id="3.90.110.10">
    <property type="entry name" value="Lactate dehydrogenase/glycoside hydrolase, family 4, C-terminal"/>
    <property type="match status" value="1"/>
</dbReference>
<dbReference type="Gene3D" id="3.40.50.720">
    <property type="entry name" value="NAD(P)-binding Rossmann-like Domain"/>
    <property type="match status" value="1"/>
</dbReference>
<dbReference type="HAMAP" id="MF_00488">
    <property type="entry name" value="Lactate_dehydrog"/>
    <property type="match status" value="1"/>
</dbReference>
<dbReference type="InterPro" id="IPR001557">
    <property type="entry name" value="L-lactate/malate_DH"/>
</dbReference>
<dbReference type="InterPro" id="IPR011304">
    <property type="entry name" value="L-lactate_DH"/>
</dbReference>
<dbReference type="InterPro" id="IPR018177">
    <property type="entry name" value="L-lactate_DH_AS"/>
</dbReference>
<dbReference type="InterPro" id="IPR022383">
    <property type="entry name" value="Lactate/malate_DH_C"/>
</dbReference>
<dbReference type="InterPro" id="IPR001236">
    <property type="entry name" value="Lactate/malate_DH_N"/>
</dbReference>
<dbReference type="InterPro" id="IPR015955">
    <property type="entry name" value="Lactate_DH/Glyco_Ohase_4_C"/>
</dbReference>
<dbReference type="InterPro" id="IPR036291">
    <property type="entry name" value="NAD(P)-bd_dom_sf"/>
</dbReference>
<dbReference type="NCBIfam" id="TIGR01771">
    <property type="entry name" value="L-LDH-NAD"/>
    <property type="match status" value="1"/>
</dbReference>
<dbReference type="PANTHER" id="PTHR43128">
    <property type="entry name" value="L-2-HYDROXYCARBOXYLATE DEHYDROGENASE (NAD(P)(+))"/>
    <property type="match status" value="1"/>
</dbReference>
<dbReference type="PANTHER" id="PTHR43128:SF16">
    <property type="entry name" value="L-LACTATE DEHYDROGENASE"/>
    <property type="match status" value="1"/>
</dbReference>
<dbReference type="Pfam" id="PF02866">
    <property type="entry name" value="Ldh_1_C"/>
    <property type="match status" value="1"/>
</dbReference>
<dbReference type="Pfam" id="PF00056">
    <property type="entry name" value="Ldh_1_N"/>
    <property type="match status" value="1"/>
</dbReference>
<dbReference type="PIRSF" id="PIRSF000102">
    <property type="entry name" value="Lac_mal_DH"/>
    <property type="match status" value="1"/>
</dbReference>
<dbReference type="PRINTS" id="PR00086">
    <property type="entry name" value="LLDHDRGNASE"/>
</dbReference>
<dbReference type="SUPFAM" id="SSF56327">
    <property type="entry name" value="LDH C-terminal domain-like"/>
    <property type="match status" value="1"/>
</dbReference>
<dbReference type="SUPFAM" id="SSF51735">
    <property type="entry name" value="NAD(P)-binding Rossmann-fold domains"/>
    <property type="match status" value="1"/>
</dbReference>
<dbReference type="PROSITE" id="PS00064">
    <property type="entry name" value="L_LDH"/>
    <property type="match status" value="1"/>
</dbReference>
<organism>
    <name type="scientific">Thermus thermophilus (strain ATCC 27634 / DSM 579 / HB8)</name>
    <dbReference type="NCBI Taxonomy" id="300852"/>
    <lineage>
        <taxon>Bacteria</taxon>
        <taxon>Thermotogati</taxon>
        <taxon>Deinococcota</taxon>
        <taxon>Deinococci</taxon>
        <taxon>Thermales</taxon>
        <taxon>Thermaceae</taxon>
        <taxon>Thermus</taxon>
    </lineage>
</organism>
<evidence type="ECO:0000255" key="1">
    <source>
        <dbReference type="HAMAP-Rule" id="MF_00488"/>
    </source>
</evidence>
<evidence type="ECO:0000269" key="2">
    <source>
    </source>
</evidence>
<evidence type="ECO:0000269" key="3">
    <source>
    </source>
</evidence>
<evidence type="ECO:0000269" key="4">
    <source ref="2"/>
</evidence>
<evidence type="ECO:0000269" key="5">
    <source ref="4"/>
</evidence>
<evidence type="ECO:0000303" key="6">
    <source>
    </source>
</evidence>
<evidence type="ECO:0000305" key="7">
    <source>
    </source>
</evidence>
<evidence type="ECO:0000305" key="8">
    <source>
    </source>
</evidence>
<evidence type="ECO:0000305" key="9">
    <source ref="2"/>
</evidence>
<evidence type="ECO:0000305" key="10">
    <source ref="4"/>
</evidence>
<evidence type="ECO:0007744" key="11">
    <source>
        <dbReference type="PDB" id="2E37"/>
    </source>
</evidence>
<evidence type="ECO:0007744" key="12">
    <source>
        <dbReference type="PDB" id="2V7P"/>
    </source>
</evidence>
<evidence type="ECO:0007744" key="13">
    <source>
        <dbReference type="PDB" id="2XXB"/>
    </source>
</evidence>
<evidence type="ECO:0007744" key="14">
    <source>
        <dbReference type="PDB" id="2XXJ"/>
    </source>
</evidence>
<evidence type="ECO:0007744" key="15">
    <source>
        <dbReference type="PDB" id="3ZZN"/>
    </source>
</evidence>
<evidence type="ECO:0007829" key="16">
    <source>
        <dbReference type="PDB" id="2XXJ"/>
    </source>
</evidence>
<protein>
    <recommendedName>
        <fullName evidence="1 6">L-lactate dehydrogenase</fullName>
        <shortName evidence="1 6">L-LDH</shortName>
        <ecNumber evidence="1 2">1.1.1.27</ecNumber>
    </recommendedName>
</protein>
<proteinExistence type="evidence at protein level"/>
<reference key="1">
    <citation type="submission" date="2004-11" db="EMBL/GenBank/DDBJ databases">
        <title>Complete genome sequence of Thermus thermophilus HB8.</title>
        <authorList>
            <person name="Masui R."/>
            <person name="Kurokawa K."/>
            <person name="Nakagawa N."/>
            <person name="Tokunaga F."/>
            <person name="Koyama Y."/>
            <person name="Shibata T."/>
            <person name="Oshima T."/>
            <person name="Yokoyama S."/>
            <person name="Yasunaga T."/>
            <person name="Kuramitsu S."/>
        </authorList>
    </citation>
    <scope>NUCLEOTIDE SEQUENCE [LARGE SCALE GENOMIC DNA]</scope>
    <source>
        <strain>ATCC 27634 / DSM 579 / HB8</strain>
    </source>
</reference>
<reference key="2">
    <citation type="submission" date="2006-11" db="PDB data bank">
        <title>Structure of TT0471 protein from Thermus thermophilus.</title>
        <authorList>
            <person name="Lokanath N.K."/>
            <person name="Kunishima N."/>
        </authorList>
    </citation>
    <scope>X-RAY CRYSTALLOGRAPHY (2.30 ANGSTROMS) IN COMPLEX WITH NAD</scope>
    <scope>SUBUNIT</scope>
</reference>
<reference key="3">
    <citation type="journal article" date="2007" name="J. Mol. Biol.">
        <title>Activity, stability and structural studies of lactate dehydrogenases adapted to extreme thermal environments.</title>
        <authorList>
            <person name="Coquelle N."/>
            <person name="Fioravanti E."/>
            <person name="Weik M."/>
            <person name="Vellieux F."/>
            <person name="Madern D."/>
        </authorList>
    </citation>
    <scope>X-RAY CRYSTALLOGRAPHY (2.10 ANGSTROMS) IN COMPLEX WITH NAD AND SUBSTRATE ANALOGS</scope>
    <scope>FUNCTION</scope>
    <scope>CATALYTIC ACTIVITY</scope>
    <scope>BIOPHYSICOCHEMICAL PROPERTIES</scope>
    <scope>ACTIVE SITE</scope>
    <scope>SUBUNIT</scope>
</reference>
<reference key="4">
    <citation type="submission" date="2010-11" db="PDB data bank">
        <title>Lactate dehydrogenase from T. thermophilus, penta-mutant (ternary complex with AMP).</title>
        <authorList>
            <person name="Diop F."/>
            <person name="Coquelle N."/>
            <person name="Tickle J."/>
            <person name="De Mendoza Barbera E."/>
            <person name="Vellieux F.M.D."/>
        </authorList>
    </citation>
    <scope>X-RAY CRYSTALLOGRAPHY (1.96 ANGSTROMS) IN COMPLEX WITH NAD AND SUBSTRATE ANALOG</scope>
    <scope>ACTIVE SITE</scope>
    <scope>SUBUNIT</scope>
</reference>
<reference key="5">
    <citation type="journal article" date="2012" name="Mol. Biol. Evol.">
        <title>Sampling the conformational energy landscape of a hyperthermophilic protein by engineering key substitutions.</title>
        <authorList>
            <person name="Colletier J.P."/>
            <person name="Aleksandrov A."/>
            <person name="Coquelle N."/>
            <person name="Mraihi S."/>
            <person name="Mendoza-Barbera E."/>
            <person name="Field M."/>
            <person name="Madern D."/>
        </authorList>
    </citation>
    <scope>X-RAY CRYSTALLOGRAPHY (2.90 ANGSTROMS) IN COMPLEX WITH NAD ANALOG</scope>
    <scope>SUBUNIT</scope>
</reference>
<comment type="function">
    <text evidence="1 2">Catalyzes the conversion of lactate to pyruvate.</text>
</comment>
<comment type="catalytic activity">
    <reaction evidence="1 2">
        <text>(S)-lactate + NAD(+) = pyruvate + NADH + H(+)</text>
        <dbReference type="Rhea" id="RHEA:23444"/>
        <dbReference type="ChEBI" id="CHEBI:15361"/>
        <dbReference type="ChEBI" id="CHEBI:15378"/>
        <dbReference type="ChEBI" id="CHEBI:16651"/>
        <dbReference type="ChEBI" id="CHEBI:57540"/>
        <dbReference type="ChEBI" id="CHEBI:57945"/>
        <dbReference type="EC" id="1.1.1.27"/>
    </reaction>
</comment>
<comment type="activity regulation">
    <text evidence="1">Allosterically activated by fructose 1,6-bisphosphate (FBP).</text>
</comment>
<comment type="biophysicochemical properties">
    <kinetics>
        <KM evidence="2">0.16 mM for pyruvate</KM>
        <text evidence="2">kcat is 676 sec(-1) for pyruvate as substrate.</text>
    </kinetics>
    <temperatureDependence>
        <text evidence="2">Optimum temperature is close to 90 degrees Celsius.</text>
    </temperatureDependence>
</comment>
<comment type="pathway">
    <text evidence="1">Fermentation; pyruvate fermentation to lactate; (S)-lactate from pyruvate: step 1/1.</text>
</comment>
<comment type="subunit">
    <text evidence="1 2 3 9 10">Homotetramer.</text>
</comment>
<comment type="subcellular location">
    <subcellularLocation>
        <location evidence="1">Cytoplasm</location>
    </subcellularLocation>
</comment>
<comment type="similarity">
    <text evidence="1">Belongs to the LDH/MDH superfamily. LDH family.</text>
</comment>
<name>LDH_THET8</name>
<gene>
    <name evidence="1" type="primary">ldh</name>
    <name type="ordered locus">TTHA1113</name>
</gene>
<keyword id="KW-0002">3D-structure</keyword>
<keyword id="KW-0021">Allosteric enzyme</keyword>
<keyword id="KW-0963">Cytoplasm</keyword>
<keyword id="KW-0520">NAD</keyword>
<keyword id="KW-0560">Oxidoreductase</keyword>
<keyword id="KW-0597">Phosphoprotein</keyword>
<keyword id="KW-1185">Reference proteome</keyword>